<proteinExistence type="inferred from homology"/>
<dbReference type="EC" id="1.11.1.-"/>
<dbReference type="EMBL" id="CP017627">
    <property type="protein sequence ID" value="AOW29523.1"/>
    <property type="molecule type" value="Genomic_DNA"/>
</dbReference>
<dbReference type="RefSeq" id="XP_714211.2">
    <property type="nucleotide sequence ID" value="XM_709118.2"/>
</dbReference>
<dbReference type="SMR" id="Q59X94"/>
<dbReference type="STRING" id="237561.Q59X94"/>
<dbReference type="PeroxiBase" id="2345">
    <property type="entry name" value="CalCcP01"/>
</dbReference>
<dbReference type="EnsemblFungi" id="C5_00810C_A-T">
    <property type="protein sequence ID" value="C5_00810C_A-T-p1"/>
    <property type="gene ID" value="C5_00810C_A"/>
</dbReference>
<dbReference type="GeneID" id="3644127"/>
<dbReference type="KEGG" id="cal:CAALFM_C500810CA"/>
<dbReference type="CGD" id="CAL0000198101">
    <property type="gene designation" value="orf19.8216"/>
</dbReference>
<dbReference type="VEuPathDB" id="FungiDB:C5_00810C_A"/>
<dbReference type="eggNOG" id="ENOG502QR1E">
    <property type="taxonomic scope" value="Eukaryota"/>
</dbReference>
<dbReference type="HOGENOM" id="CLU_036959_0_1_1"/>
<dbReference type="InParanoid" id="Q59X94"/>
<dbReference type="OMA" id="MGKCYPK"/>
<dbReference type="OrthoDB" id="2859658at2759"/>
<dbReference type="BRENDA" id="1.11.1.B10">
    <property type="organism ID" value="1096"/>
</dbReference>
<dbReference type="PRO" id="PR:Q59X94"/>
<dbReference type="Proteomes" id="UP000000559">
    <property type="component" value="Chromosome 5"/>
</dbReference>
<dbReference type="GO" id="GO:0020037">
    <property type="term" value="F:heme binding"/>
    <property type="evidence" value="ECO:0007669"/>
    <property type="project" value="InterPro"/>
</dbReference>
<dbReference type="GO" id="GO:0046872">
    <property type="term" value="F:metal ion binding"/>
    <property type="evidence" value="ECO:0007669"/>
    <property type="project" value="UniProtKB-KW"/>
</dbReference>
<dbReference type="GO" id="GO:0004601">
    <property type="term" value="F:peroxidase activity"/>
    <property type="evidence" value="ECO:0000318"/>
    <property type="project" value="GO_Central"/>
</dbReference>
<dbReference type="GO" id="GO:0034599">
    <property type="term" value="P:cellular response to oxidative stress"/>
    <property type="evidence" value="ECO:0000318"/>
    <property type="project" value="GO_Central"/>
</dbReference>
<dbReference type="GO" id="GO:0042744">
    <property type="term" value="P:hydrogen peroxide catabolic process"/>
    <property type="evidence" value="ECO:0000318"/>
    <property type="project" value="GO_Central"/>
</dbReference>
<dbReference type="GO" id="GO:0000302">
    <property type="term" value="P:response to reactive oxygen species"/>
    <property type="evidence" value="ECO:0000318"/>
    <property type="project" value="GO_Central"/>
</dbReference>
<dbReference type="FunFam" id="1.10.420.10:FF:000009">
    <property type="entry name" value="Ascorbate peroxidase"/>
    <property type="match status" value="1"/>
</dbReference>
<dbReference type="FunFam" id="1.10.520.10:FF:000005">
    <property type="entry name" value="Cytochrome c peroxidase"/>
    <property type="match status" value="1"/>
</dbReference>
<dbReference type="Gene3D" id="1.10.520.10">
    <property type="match status" value="1"/>
</dbReference>
<dbReference type="Gene3D" id="1.10.420.10">
    <property type="entry name" value="Peroxidase, domain 2"/>
    <property type="match status" value="1"/>
</dbReference>
<dbReference type="InterPro" id="IPR044831">
    <property type="entry name" value="Ccp1-like"/>
</dbReference>
<dbReference type="InterPro" id="IPR002016">
    <property type="entry name" value="Haem_peroxidase"/>
</dbReference>
<dbReference type="InterPro" id="IPR010255">
    <property type="entry name" value="Haem_peroxidase_sf"/>
</dbReference>
<dbReference type="InterPro" id="IPR002207">
    <property type="entry name" value="Peroxidase_I"/>
</dbReference>
<dbReference type="InterPro" id="IPR019794">
    <property type="entry name" value="Peroxidases_AS"/>
</dbReference>
<dbReference type="PANTHER" id="PTHR31356:SF36">
    <property type="entry name" value="L-ASCORBATE PEROXIDASE 3"/>
    <property type="match status" value="1"/>
</dbReference>
<dbReference type="PANTHER" id="PTHR31356">
    <property type="entry name" value="THYLAKOID LUMENAL 29 KDA PROTEIN, CHLOROPLASTIC-RELATED"/>
    <property type="match status" value="1"/>
</dbReference>
<dbReference type="Pfam" id="PF00141">
    <property type="entry name" value="peroxidase"/>
    <property type="match status" value="1"/>
</dbReference>
<dbReference type="PRINTS" id="PR00459">
    <property type="entry name" value="ASPEROXIDASE"/>
</dbReference>
<dbReference type="PRINTS" id="PR00458">
    <property type="entry name" value="PEROXIDASE"/>
</dbReference>
<dbReference type="SUPFAM" id="SSF48113">
    <property type="entry name" value="Heme-dependent peroxidases"/>
    <property type="match status" value="1"/>
</dbReference>
<dbReference type="PROSITE" id="PS00436">
    <property type="entry name" value="PEROXIDASE_2"/>
    <property type="match status" value="1"/>
</dbReference>
<dbReference type="PROSITE" id="PS50873">
    <property type="entry name" value="PEROXIDASE_4"/>
    <property type="match status" value="1"/>
</dbReference>
<organism>
    <name type="scientific">Candida albicans (strain SC5314 / ATCC MYA-2876)</name>
    <name type="common">Yeast</name>
    <dbReference type="NCBI Taxonomy" id="237561"/>
    <lineage>
        <taxon>Eukaryota</taxon>
        <taxon>Fungi</taxon>
        <taxon>Dikarya</taxon>
        <taxon>Ascomycota</taxon>
        <taxon>Saccharomycotina</taxon>
        <taxon>Pichiomycetes</taxon>
        <taxon>Debaryomycetaceae</taxon>
        <taxon>Candida/Lodderomyces clade</taxon>
        <taxon>Candida</taxon>
    </lineage>
</organism>
<name>CCPR2_CANAL</name>
<accession>Q59X94</accession>
<accession>A0A1D8PN10</accession>
<protein>
    <recommendedName>
        <fullName>Putative heme-binding peroxidase</fullName>
        <ecNumber>1.11.1.-</ecNumber>
    </recommendedName>
</protein>
<reference key="1">
    <citation type="journal article" date="2004" name="Proc. Natl. Acad. Sci. U.S.A.">
        <title>The diploid genome sequence of Candida albicans.</title>
        <authorList>
            <person name="Jones T."/>
            <person name="Federspiel N.A."/>
            <person name="Chibana H."/>
            <person name="Dungan J."/>
            <person name="Kalman S."/>
            <person name="Magee B.B."/>
            <person name="Newport G."/>
            <person name="Thorstenson Y.R."/>
            <person name="Agabian N."/>
            <person name="Magee P.T."/>
            <person name="Davis R.W."/>
            <person name="Scherer S."/>
        </authorList>
    </citation>
    <scope>NUCLEOTIDE SEQUENCE [LARGE SCALE GENOMIC DNA]</scope>
    <source>
        <strain>SC5314 / ATCC MYA-2876</strain>
    </source>
</reference>
<reference key="2">
    <citation type="journal article" date="2007" name="Genome Biol.">
        <title>Assembly of the Candida albicans genome into sixteen supercontigs aligned on the eight chromosomes.</title>
        <authorList>
            <person name="van het Hoog M."/>
            <person name="Rast T.J."/>
            <person name="Martchenko M."/>
            <person name="Grindle S."/>
            <person name="Dignard D."/>
            <person name="Hogues H."/>
            <person name="Cuomo C."/>
            <person name="Berriman M."/>
            <person name="Scherer S."/>
            <person name="Magee B.B."/>
            <person name="Whiteway M."/>
            <person name="Chibana H."/>
            <person name="Nantel A."/>
            <person name="Magee P.T."/>
        </authorList>
    </citation>
    <scope>GENOME REANNOTATION</scope>
    <source>
        <strain>SC5314 / ATCC MYA-2876</strain>
    </source>
</reference>
<reference key="3">
    <citation type="journal article" date="2013" name="Genome Biol.">
        <title>Assembly of a phased diploid Candida albicans genome facilitates allele-specific measurements and provides a simple model for repeat and indel structure.</title>
        <authorList>
            <person name="Muzzey D."/>
            <person name="Schwartz K."/>
            <person name="Weissman J.S."/>
            <person name="Sherlock G."/>
        </authorList>
    </citation>
    <scope>NUCLEOTIDE SEQUENCE [LARGE SCALE GENOMIC DNA]</scope>
    <scope>GENOME REANNOTATION</scope>
    <source>
        <strain>SC5314 / ATCC MYA-2876</strain>
    </source>
</reference>
<keyword id="KW-0349">Heme</keyword>
<keyword id="KW-0408">Iron</keyword>
<keyword id="KW-0479">Metal-binding</keyword>
<keyword id="KW-0560">Oxidoreductase</keyword>
<keyword id="KW-0575">Peroxidase</keyword>
<keyword id="KW-1185">Reference proteome</keyword>
<sequence>MIRSYIRNIILAILSPLLTTPPPLILPPPYEKIIQEITTVLSINNYDDGSLAPIILRLAWHCCATYDMTTNTGGSNGATMRFVPEITDEGNYGLDIARAALEPIKQRYPAISYADLWTLAGKVAIEYMGGPTIIWKSGRVDYTNDRCTPSNGLLPFADKDANHIRKTFTRLGYNDQQTVALIGAHGVGRCHKRFSGWEGKWTRTPKTFSNQFYVVLLNETWSQGEVPETGKTQYFNADKSLIMLNTDMELIRDKSYLHWVEIYAKDEPKFFHDFSSAFAKLLELGIKRETL</sequence>
<comment type="function">
    <text evidence="1">Destroys radicals which are normally produced within the cells and which are toxic to biological systems.</text>
</comment>
<comment type="cofactor">
    <cofactor evidence="2">
        <name>heme b</name>
        <dbReference type="ChEBI" id="CHEBI:60344"/>
    </cofactor>
    <text evidence="2">Binds 1 heme b (iron(II)-protoporphyrin IX) group per subunit.</text>
</comment>
<comment type="similarity">
    <text evidence="4">Belongs to the peroxidase family. Cytochrome c peroxidase subfamily.</text>
</comment>
<feature type="chain" id="PRO_0000055584" description="Putative heme-binding peroxidase">
    <location>
        <begin position="1"/>
        <end position="291"/>
    </location>
</feature>
<feature type="active site" description="Proton acceptor" evidence="2 3">
    <location>
        <position position="61"/>
    </location>
</feature>
<feature type="active site" description="Tryptophan radical intermediate" evidence="1">
    <location>
        <position position="201"/>
    </location>
</feature>
<feature type="binding site" description="axial binding residue" evidence="2">
    <location>
        <position position="185"/>
    </location>
    <ligand>
        <name>heme b</name>
        <dbReference type="ChEBI" id="CHEBI:60344"/>
    </ligand>
    <ligandPart>
        <name>Fe</name>
        <dbReference type="ChEBI" id="CHEBI:18248"/>
    </ligandPart>
</feature>
<feature type="site" description="Transition state stabilizer" evidence="2">
    <location>
        <position position="57"/>
    </location>
</feature>
<gene>
    <name type="primary">CCP2</name>
    <name type="ordered locus">CAALFM_C500810CA</name>
    <name type="ORF">CaO19.584</name>
    <name type="ORF">CaO19.8216</name>
</gene>
<evidence type="ECO:0000250" key="1"/>
<evidence type="ECO:0000255" key="2">
    <source>
        <dbReference type="PROSITE-ProRule" id="PRU00297"/>
    </source>
</evidence>
<evidence type="ECO:0000255" key="3">
    <source>
        <dbReference type="PROSITE-ProRule" id="PRU10012"/>
    </source>
</evidence>
<evidence type="ECO:0000305" key="4"/>